<protein>
    <recommendedName>
        <fullName evidence="1">LPS-assembly protein LptD</fullName>
    </recommendedName>
</protein>
<organism>
    <name type="scientific">Acinetobacter baylyi (strain ATCC 33305 / BD413 / ADP1)</name>
    <dbReference type="NCBI Taxonomy" id="62977"/>
    <lineage>
        <taxon>Bacteria</taxon>
        <taxon>Pseudomonadati</taxon>
        <taxon>Pseudomonadota</taxon>
        <taxon>Gammaproteobacteria</taxon>
        <taxon>Moraxellales</taxon>
        <taxon>Moraxellaceae</taxon>
        <taxon>Acinetobacter</taxon>
    </lineage>
</organism>
<evidence type="ECO:0000255" key="1">
    <source>
        <dbReference type="HAMAP-Rule" id="MF_01411"/>
    </source>
</evidence>
<accession>Q6F9W4</accession>
<name>LPTD_ACIAD</name>
<reference key="1">
    <citation type="journal article" date="2004" name="Nucleic Acids Res.">
        <title>Unique features revealed by the genome sequence of Acinetobacter sp. ADP1, a versatile and naturally transformation competent bacterium.</title>
        <authorList>
            <person name="Barbe V."/>
            <person name="Vallenet D."/>
            <person name="Fonknechten N."/>
            <person name="Kreimeyer A."/>
            <person name="Oztas S."/>
            <person name="Labarre L."/>
            <person name="Cruveiller S."/>
            <person name="Robert C."/>
            <person name="Duprat S."/>
            <person name="Wincker P."/>
            <person name="Ornston L.N."/>
            <person name="Weissenbach J."/>
            <person name="Marliere P."/>
            <person name="Cohen G.N."/>
            <person name="Medigue C."/>
        </authorList>
    </citation>
    <scope>NUCLEOTIDE SEQUENCE [LARGE SCALE GENOMIC DNA]</scope>
    <source>
        <strain>ATCC 33305 / BD413 / ADP1</strain>
    </source>
</reference>
<sequence>MRQMKYQFKFNPLAAAIFTLLCGGSMQSSYADANDSASSVDNKKLKESIQKAYPGQEFFEQYYVEKSSPEAQVRDTRSLSSAFCTGTWITPISPTTQAVPADQATSVVTADYAHYNPNGDSELEGNVLIDQQGRSIRANKVTIDRTQTYANAEGNVQLAQAGLLAQSDQINYNLKTQQGDLKNSFYISEQQHAHGHAEQIQRTSPTEIILRNATYTTCPPEQKPTWRLEAKEIKLNQDTGRGTTKNTKLYVKDVPILAVPYFNFPIDNRRTTGILNPNIGFSNDGGLELTVPVYLNLAPNYDATLTPRYISDRGVMLQSEFRYLTENFGQGKIWGGYLPDDKKYNNEDRKDFNLLHKWKINDYWSTDVEYHYASDKDYVTDLDTNPDSKTDLNLRRAWTLKYKNQIPGLTAQLKVEDFQTLDKTVSDVDKPYARLPQFLLNYVTGNPLGLQYEFNNDTAYFKKNIDDAANYSTQPSGTRIYNQFATRYNFRTPWAFAIPEVSIRSINTFYDQNTVENLGLNSDNKSKSVVVPQFSLDTGLIFQRDGDYLQTITPRAFYAYAPYKNQTGYPNFDTTSASINYDQLFSPYRFYGHDRLEDNNFLSLGVSYSLFDPQGLERLRAGVGQSFYFADRRVTLNNTDDTIDTSKNSGPIVSISSQLTNKFTVAANSAWMSNGDNAQHDFQTYYTGDHGNLYNLGYFNRKNIPDRQLAYDAAVASFVQPIMNNWRIMGHVQFDFRNNVAREYLLGVNYESCCYAISVYGRSYYNDLDDPKDPNVNVKRAVMAEITFKGLGGLNNKLASLLENRVLGFKEINQSWTQR</sequence>
<dbReference type="EMBL" id="CR543861">
    <property type="protein sequence ID" value="CAG69149.1"/>
    <property type="molecule type" value="Genomic_DNA"/>
</dbReference>
<dbReference type="RefSeq" id="WP_011182497.1">
    <property type="nucleotide sequence ID" value="NC_005966.1"/>
</dbReference>
<dbReference type="SMR" id="Q6F9W4"/>
<dbReference type="STRING" id="202950.GCA_001485005_00037"/>
<dbReference type="GeneID" id="45234686"/>
<dbReference type="KEGG" id="aci:ACIAD2371"/>
<dbReference type="eggNOG" id="COG1452">
    <property type="taxonomic scope" value="Bacteria"/>
</dbReference>
<dbReference type="HOGENOM" id="CLU_009039_1_0_6"/>
<dbReference type="OrthoDB" id="9760225at2"/>
<dbReference type="Proteomes" id="UP000000430">
    <property type="component" value="Chromosome"/>
</dbReference>
<dbReference type="GO" id="GO:0009279">
    <property type="term" value="C:cell outer membrane"/>
    <property type="evidence" value="ECO:0007669"/>
    <property type="project" value="UniProtKB-SubCell"/>
</dbReference>
<dbReference type="GO" id="GO:1990351">
    <property type="term" value="C:transporter complex"/>
    <property type="evidence" value="ECO:0007669"/>
    <property type="project" value="TreeGrafter"/>
</dbReference>
<dbReference type="GO" id="GO:0043165">
    <property type="term" value="P:Gram-negative-bacterium-type cell outer membrane assembly"/>
    <property type="evidence" value="ECO:0007669"/>
    <property type="project" value="UniProtKB-UniRule"/>
</dbReference>
<dbReference type="GO" id="GO:0015920">
    <property type="term" value="P:lipopolysaccharide transport"/>
    <property type="evidence" value="ECO:0007669"/>
    <property type="project" value="InterPro"/>
</dbReference>
<dbReference type="Gene3D" id="2.60.450.10">
    <property type="entry name" value="Lipopolysaccharide (LPS) transport protein A like domain"/>
    <property type="match status" value="1"/>
</dbReference>
<dbReference type="HAMAP" id="MF_01411">
    <property type="entry name" value="LPS_assembly_LptD"/>
    <property type="match status" value="1"/>
</dbReference>
<dbReference type="InterPro" id="IPR020889">
    <property type="entry name" value="LipoPS_assembly_LptD"/>
</dbReference>
<dbReference type="InterPro" id="IPR050218">
    <property type="entry name" value="LptD"/>
</dbReference>
<dbReference type="InterPro" id="IPR007543">
    <property type="entry name" value="LptD_C"/>
</dbReference>
<dbReference type="InterPro" id="IPR005653">
    <property type="entry name" value="OstA-like_N"/>
</dbReference>
<dbReference type="PANTHER" id="PTHR30189">
    <property type="entry name" value="LPS-ASSEMBLY PROTEIN"/>
    <property type="match status" value="1"/>
</dbReference>
<dbReference type="PANTHER" id="PTHR30189:SF1">
    <property type="entry name" value="LPS-ASSEMBLY PROTEIN LPTD"/>
    <property type="match status" value="1"/>
</dbReference>
<dbReference type="Pfam" id="PF04453">
    <property type="entry name" value="LptD"/>
    <property type="match status" value="1"/>
</dbReference>
<dbReference type="Pfam" id="PF03968">
    <property type="entry name" value="LptD_N"/>
    <property type="match status" value="1"/>
</dbReference>
<keyword id="KW-0998">Cell outer membrane</keyword>
<keyword id="KW-0472">Membrane</keyword>
<keyword id="KW-0732">Signal</keyword>
<proteinExistence type="inferred from homology"/>
<comment type="function">
    <text evidence="1">Together with LptE, is involved in the assembly of lipopolysaccharide (LPS) at the surface of the outer membrane.</text>
</comment>
<comment type="subunit">
    <text evidence="1">Component of the lipopolysaccharide transport and assembly complex. Interacts with LptE and LptA.</text>
</comment>
<comment type="subcellular location">
    <subcellularLocation>
        <location evidence="1">Cell outer membrane</location>
    </subcellularLocation>
</comment>
<comment type="similarity">
    <text evidence="1">Belongs to the LptD family.</text>
</comment>
<gene>
    <name evidence="1" type="primary">lptD</name>
    <name type="synonym">imp</name>
    <name type="synonym">ostA</name>
    <name type="ordered locus">ACIAD2371</name>
</gene>
<feature type="signal peptide" evidence="1">
    <location>
        <begin position="1"/>
        <end position="33"/>
    </location>
</feature>
<feature type="chain" id="PRO_0000281584" description="LPS-assembly protein LptD">
    <location>
        <begin position="34"/>
        <end position="819"/>
    </location>
</feature>